<protein>
    <recommendedName>
        <fullName evidence="1">Large ribosomal subunit protein eL43</fullName>
    </recommendedName>
    <alternativeName>
        <fullName evidence="2">50S ribosomal protein L37Ae</fullName>
    </alternativeName>
    <alternativeName>
        <fullName evidence="1">Ribosomal protein L43e</fullName>
    </alternativeName>
</protein>
<feature type="chain" id="PRO_1000005040" description="Large ribosomal subunit protein eL43">
    <location>
        <begin position="1"/>
        <end position="96"/>
    </location>
</feature>
<feature type="zinc finger region" description="C4-type" evidence="1">
    <location>
        <begin position="41"/>
        <end position="62"/>
    </location>
</feature>
<organism>
    <name type="scientific">Methanococcus vannielii (strain ATCC 35089 / DSM 1224 / JCM 13029 / OCM 148 / SB)</name>
    <dbReference type="NCBI Taxonomy" id="406327"/>
    <lineage>
        <taxon>Archaea</taxon>
        <taxon>Methanobacteriati</taxon>
        <taxon>Methanobacteriota</taxon>
        <taxon>Methanomada group</taxon>
        <taxon>Methanococci</taxon>
        <taxon>Methanococcales</taxon>
        <taxon>Methanococcaceae</taxon>
        <taxon>Methanococcus</taxon>
    </lineage>
</organism>
<comment type="cofactor">
    <cofactor evidence="1">
        <name>Zn(2+)</name>
        <dbReference type="ChEBI" id="CHEBI:29105"/>
    </cofactor>
    <text evidence="1">Binds 1 zinc ion per subunit.</text>
</comment>
<comment type="similarity">
    <text evidence="1">Belongs to the eukaryotic ribosomal protein eL43 family.</text>
</comment>
<proteinExistence type="inferred from homology"/>
<reference key="1">
    <citation type="submission" date="2007-06" db="EMBL/GenBank/DDBJ databases">
        <title>Complete sequence of Methanococcus vannielii SB.</title>
        <authorList>
            <consortium name="US DOE Joint Genome Institute"/>
            <person name="Copeland A."/>
            <person name="Lucas S."/>
            <person name="Lapidus A."/>
            <person name="Barry K."/>
            <person name="Glavina del Rio T."/>
            <person name="Dalin E."/>
            <person name="Tice H."/>
            <person name="Pitluck S."/>
            <person name="Chain P."/>
            <person name="Malfatti S."/>
            <person name="Shin M."/>
            <person name="Vergez L."/>
            <person name="Schmutz J."/>
            <person name="Larimer F."/>
            <person name="Land M."/>
            <person name="Hauser L."/>
            <person name="Kyrpides N."/>
            <person name="Anderson I."/>
            <person name="Sieprawska-Lupa M."/>
            <person name="Whitman W.B."/>
            <person name="Richardson P."/>
        </authorList>
    </citation>
    <scope>NUCLEOTIDE SEQUENCE [LARGE SCALE GENOMIC DNA]</scope>
    <source>
        <strain>ATCC 35089 / DSM 1224 / JCM 13029 / OCM 148 / SB</strain>
    </source>
</reference>
<evidence type="ECO:0000255" key="1">
    <source>
        <dbReference type="HAMAP-Rule" id="MF_00327"/>
    </source>
</evidence>
<evidence type="ECO:0000305" key="2"/>
<sequence>MVEFSHTKKIGSAGRFGPRYGRKIRVRLRDVEIKQNKEYKCPVCAFPKLKRAGTSIWVCDKCGAKIAGGAYTPETGAGKVVTKAIRRVIESKSREI</sequence>
<accession>A6URN7</accession>
<name>RL37A_METVS</name>
<dbReference type="EMBL" id="CP000742">
    <property type="protein sequence ID" value="ABR55159.1"/>
    <property type="molecule type" value="Genomic_DNA"/>
</dbReference>
<dbReference type="RefSeq" id="WP_012066074.1">
    <property type="nucleotide sequence ID" value="NC_009634.1"/>
</dbReference>
<dbReference type="SMR" id="A6URN7"/>
<dbReference type="STRING" id="406327.Mevan_1262"/>
<dbReference type="GeneID" id="5324644"/>
<dbReference type="KEGG" id="mvn:Mevan_1262"/>
<dbReference type="eggNOG" id="arCOG04208">
    <property type="taxonomic scope" value="Archaea"/>
</dbReference>
<dbReference type="HOGENOM" id="CLU_141199_2_0_2"/>
<dbReference type="OrthoDB" id="372011at2157"/>
<dbReference type="Proteomes" id="UP000001107">
    <property type="component" value="Chromosome"/>
</dbReference>
<dbReference type="GO" id="GO:1990904">
    <property type="term" value="C:ribonucleoprotein complex"/>
    <property type="evidence" value="ECO:0007669"/>
    <property type="project" value="UniProtKB-KW"/>
</dbReference>
<dbReference type="GO" id="GO:0005840">
    <property type="term" value="C:ribosome"/>
    <property type="evidence" value="ECO:0007669"/>
    <property type="project" value="UniProtKB-KW"/>
</dbReference>
<dbReference type="GO" id="GO:0070180">
    <property type="term" value="F:large ribosomal subunit rRNA binding"/>
    <property type="evidence" value="ECO:0007669"/>
    <property type="project" value="UniProtKB-UniRule"/>
</dbReference>
<dbReference type="GO" id="GO:0003735">
    <property type="term" value="F:structural constituent of ribosome"/>
    <property type="evidence" value="ECO:0007669"/>
    <property type="project" value="InterPro"/>
</dbReference>
<dbReference type="GO" id="GO:0008270">
    <property type="term" value="F:zinc ion binding"/>
    <property type="evidence" value="ECO:0007669"/>
    <property type="project" value="UniProtKB-UniRule"/>
</dbReference>
<dbReference type="GO" id="GO:0006412">
    <property type="term" value="P:translation"/>
    <property type="evidence" value="ECO:0007669"/>
    <property type="project" value="UniProtKB-UniRule"/>
</dbReference>
<dbReference type="Gene3D" id="2.20.25.30">
    <property type="match status" value="1"/>
</dbReference>
<dbReference type="HAMAP" id="MF_00327">
    <property type="entry name" value="Ribosomal_eL43"/>
    <property type="match status" value="1"/>
</dbReference>
<dbReference type="InterPro" id="IPR011331">
    <property type="entry name" value="Ribosomal_eL37/eL43"/>
</dbReference>
<dbReference type="InterPro" id="IPR002674">
    <property type="entry name" value="Ribosomal_eL43"/>
</dbReference>
<dbReference type="InterPro" id="IPR050522">
    <property type="entry name" value="Ribosomal_protein_eL43"/>
</dbReference>
<dbReference type="InterPro" id="IPR011332">
    <property type="entry name" value="Ribosomal_zn-bd"/>
</dbReference>
<dbReference type="NCBIfam" id="TIGR00280">
    <property type="entry name" value="eL43_euk_arch"/>
    <property type="match status" value="1"/>
</dbReference>
<dbReference type="NCBIfam" id="NF003058">
    <property type="entry name" value="PRK03976.1"/>
    <property type="match status" value="1"/>
</dbReference>
<dbReference type="PANTHER" id="PTHR48129">
    <property type="entry name" value="60S RIBOSOMAL PROTEIN L37A"/>
    <property type="match status" value="1"/>
</dbReference>
<dbReference type="PANTHER" id="PTHR48129:SF1">
    <property type="entry name" value="LARGE RIBOSOMAL SUBUNIT PROTEIN EL43"/>
    <property type="match status" value="1"/>
</dbReference>
<dbReference type="Pfam" id="PF01780">
    <property type="entry name" value="Ribosomal_L37ae"/>
    <property type="match status" value="1"/>
</dbReference>
<dbReference type="SUPFAM" id="SSF57829">
    <property type="entry name" value="Zn-binding ribosomal proteins"/>
    <property type="match status" value="1"/>
</dbReference>
<keyword id="KW-0479">Metal-binding</keyword>
<keyword id="KW-0687">Ribonucleoprotein</keyword>
<keyword id="KW-0689">Ribosomal protein</keyword>
<keyword id="KW-0694">RNA-binding</keyword>
<keyword id="KW-0862">Zinc</keyword>
<keyword id="KW-0863">Zinc-finger</keyword>
<gene>
    <name evidence="1" type="primary">rpl37ae</name>
    <name type="ordered locus">Mevan_1262</name>
</gene>